<protein>
    <recommendedName>
        <fullName>Solute carrier family 28 member 3</fullName>
    </recommendedName>
    <alternativeName>
        <fullName>Concentrative Na(+)-nucleoside cotransporter 3</fullName>
    </alternativeName>
    <alternativeName>
        <fullName>hfCNT</fullName>
    </alternativeName>
</protein>
<accession>Q9UA35</accession>
<evidence type="ECO:0000250" key="1">
    <source>
        <dbReference type="UniProtKB" id="Q9HAS3"/>
    </source>
</evidence>
<evidence type="ECO:0000255" key="2"/>
<evidence type="ECO:0000256" key="3">
    <source>
        <dbReference type="SAM" id="MobiDB-lite"/>
    </source>
</evidence>
<evidence type="ECO:0000305" key="4"/>
<feature type="chain" id="PRO_0000324149" description="Solute carrier family 28 member 3">
    <location>
        <begin position="1"/>
        <end position="683"/>
    </location>
</feature>
<feature type="topological domain" description="Cytoplasmic" evidence="4">
    <location>
        <begin position="1"/>
        <end position="97"/>
    </location>
</feature>
<feature type="transmembrane region" description="Helical; Name=TM1" evidence="1">
    <location>
        <begin position="98"/>
        <end position="118"/>
    </location>
</feature>
<feature type="topological domain" description="Extracellular" evidence="4">
    <location>
        <begin position="119"/>
        <end position="123"/>
    </location>
</feature>
<feature type="transmembrane region" description="Helical; Name=TM2" evidence="1">
    <location>
        <begin position="124"/>
        <end position="144"/>
    </location>
</feature>
<feature type="topological domain" description="Cytoplasmic" evidence="4">
    <location>
        <begin position="145"/>
        <end position="168"/>
    </location>
</feature>
<feature type="transmembrane region" description="Helical; Name=TM3" evidence="1">
    <location>
        <begin position="169"/>
        <end position="189"/>
    </location>
</feature>
<feature type="topological domain" description="Extracellular" evidence="4">
    <location>
        <begin position="190"/>
        <end position="192"/>
    </location>
</feature>
<feature type="transmembrane region" description="Helical; Name=TM4" evidence="1">
    <location>
        <begin position="193"/>
        <end position="214"/>
    </location>
</feature>
<feature type="topological domain" description="Cytoplasmic" evidence="4">
    <location>
        <begin position="215"/>
        <end position="222"/>
    </location>
</feature>
<feature type="transmembrane region" description="Helical; Name=TM5" evidence="1">
    <location>
        <begin position="223"/>
        <end position="242"/>
    </location>
</feature>
<feature type="topological domain" description="Extracellular" evidence="4">
    <location>
        <begin position="243"/>
        <end position="279"/>
    </location>
</feature>
<feature type="transmembrane region" description="Helical; Name=TM6" evidence="1">
    <location>
        <begin position="280"/>
        <end position="300"/>
    </location>
</feature>
<feature type="topological domain" description="Cytoplasmic" evidence="4">
    <location>
        <begin position="301"/>
        <end position="324"/>
    </location>
</feature>
<feature type="intramembrane region" description="Helical; Name=HP1" evidence="1">
    <location>
        <begin position="325"/>
        <end position="343"/>
    </location>
</feature>
<feature type="topological domain" description="Cytoplasmic" evidence="4">
    <location>
        <begin position="344"/>
        <end position="356"/>
    </location>
</feature>
<feature type="transmembrane region" description="Helical; Name=TM7" evidence="1">
    <location>
        <begin position="357"/>
        <end position="379"/>
    </location>
</feature>
<feature type="topological domain" description="Extracellular" evidence="4">
    <location>
        <begin position="380"/>
        <end position="381"/>
    </location>
</feature>
<feature type="transmembrane region" description="Helical; Name=TM8" evidence="1">
    <location>
        <begin position="382"/>
        <end position="403"/>
    </location>
</feature>
<feature type="topological domain" description="Cytoplasmic" evidence="4">
    <location>
        <begin position="404"/>
        <end position="438"/>
    </location>
</feature>
<feature type="transmembrane region" description="Helical; Name=TM9" evidence="1">
    <location>
        <begin position="439"/>
        <end position="464"/>
    </location>
</feature>
<feature type="topological domain" description="Extracellular" evidence="4">
    <location>
        <begin position="465"/>
        <end position="502"/>
    </location>
</feature>
<feature type="intramembrane region" description="Helical; Name=HP2" evidence="1">
    <location>
        <begin position="503"/>
        <end position="522"/>
    </location>
</feature>
<feature type="topological domain" description="Extracellular" evidence="4">
    <location>
        <begin position="523"/>
        <end position="561"/>
    </location>
</feature>
<feature type="transmembrane region" description="Helical; Name=TM10" evidence="1">
    <location>
        <begin position="562"/>
        <end position="572"/>
    </location>
</feature>
<feature type="topological domain" description="Cytoplasmic" evidence="4">
    <location>
        <begin position="573"/>
        <end position="585"/>
    </location>
</feature>
<feature type="transmembrane region" description="Helical; Name=TM11" evidence="1">
    <location>
        <begin position="586"/>
        <end position="608"/>
    </location>
</feature>
<feature type="topological domain" description="Extracellular" evidence="4">
    <location>
        <begin position="609"/>
        <end position="683"/>
    </location>
</feature>
<feature type="region of interest" description="Disordered" evidence="3">
    <location>
        <begin position="1"/>
        <end position="71"/>
    </location>
</feature>
<feature type="compositionally biased region" description="Acidic residues" evidence="3">
    <location>
        <begin position="60"/>
        <end position="71"/>
    </location>
</feature>
<comment type="function">
    <text evidence="1">Sodium-dependent, pyrimidine- and purine-selective. Involved in the homeostasis of endogenous nucleosides. Exhibits the transport characteristics of the nucleoside transport system cib or N3 subtype (N3/cib) (with marked transport of both thymidine and inosine). Employs a 2:1 sodium/nucleoside ratio. Also able to transport gemcitabine, 3'-azido-3'-deoxythymidine (AZT), ribavirin and 3-deazauridine.</text>
</comment>
<comment type="catalytic activity">
    <reaction evidence="1">
        <text>thymidine(out) + 2 Na(+)(out) = thymidine(in) + 2 Na(+)(in)</text>
        <dbReference type="Rhea" id="RHEA:69899"/>
        <dbReference type="ChEBI" id="CHEBI:17748"/>
        <dbReference type="ChEBI" id="CHEBI:29101"/>
    </reaction>
</comment>
<comment type="catalytic activity">
    <reaction evidence="1">
        <text>cytidine(out) + 2 Na(+)(out) = cytidine(in) + 2 Na(+)(in)</text>
        <dbReference type="Rhea" id="RHEA:69903"/>
        <dbReference type="ChEBI" id="CHEBI:17562"/>
        <dbReference type="ChEBI" id="CHEBI:29101"/>
    </reaction>
</comment>
<comment type="catalytic activity">
    <reaction evidence="1">
        <text>uridine(out) + 2 Na(+)(out) = uridine(in) + 2 Na(+)(in)</text>
        <dbReference type="Rhea" id="RHEA:69907"/>
        <dbReference type="ChEBI" id="CHEBI:16704"/>
        <dbReference type="ChEBI" id="CHEBI:29101"/>
    </reaction>
</comment>
<comment type="catalytic activity">
    <reaction evidence="1">
        <text>adenosine(out) + 2 Na(+)(out) = adenosine(in) + 2 Na(+)(in)</text>
        <dbReference type="Rhea" id="RHEA:69911"/>
        <dbReference type="ChEBI" id="CHEBI:16335"/>
        <dbReference type="ChEBI" id="CHEBI:29101"/>
    </reaction>
</comment>
<comment type="catalytic activity">
    <reaction evidence="1">
        <text>guanosine(out) + 2 Na(+)(out) = guanosine(in) + 2 Na(+)(in)</text>
        <dbReference type="Rhea" id="RHEA:69915"/>
        <dbReference type="ChEBI" id="CHEBI:16750"/>
        <dbReference type="ChEBI" id="CHEBI:29101"/>
    </reaction>
</comment>
<comment type="catalytic activity">
    <reaction evidence="1">
        <text>inosine(out) + 2 Na(+)(out) = inosine(in) + 2 Na(+)(in)</text>
        <dbReference type="Rhea" id="RHEA:69919"/>
        <dbReference type="ChEBI" id="CHEBI:17596"/>
        <dbReference type="ChEBI" id="CHEBI:29101"/>
    </reaction>
</comment>
<comment type="subunit">
    <text evidence="1">Homotrimer.</text>
</comment>
<comment type="subcellular location">
    <subcellularLocation>
        <location evidence="1">Cell membrane</location>
        <topology evidence="2">Multi-pass membrane protein</topology>
    </subcellularLocation>
</comment>
<comment type="similarity">
    <text evidence="4">Belongs to the concentrative nucleoside transporter (CNT) (TC 2.A.41) family.</text>
</comment>
<keyword id="KW-1003">Cell membrane</keyword>
<keyword id="KW-0472">Membrane</keyword>
<keyword id="KW-0769">Symport</keyword>
<keyword id="KW-0812">Transmembrane</keyword>
<keyword id="KW-1133">Transmembrane helix</keyword>
<keyword id="KW-0813">Transport</keyword>
<dbReference type="EMBL" id="AF132298">
    <property type="protein sequence ID" value="AAD52151.1"/>
    <property type="molecule type" value="mRNA"/>
</dbReference>
<dbReference type="SMR" id="Q9UA35"/>
<dbReference type="TCDB" id="2.A.41.2.5">
    <property type="family name" value="the concentrative nucleoside transporter (cnt) family"/>
</dbReference>
<dbReference type="GO" id="GO:0005886">
    <property type="term" value="C:plasma membrane"/>
    <property type="evidence" value="ECO:0007669"/>
    <property type="project" value="UniProtKB-SubCell"/>
</dbReference>
<dbReference type="GO" id="GO:0015390">
    <property type="term" value="F:purine-specific nucleoside:sodium symporter activity"/>
    <property type="evidence" value="ECO:0007669"/>
    <property type="project" value="TreeGrafter"/>
</dbReference>
<dbReference type="GO" id="GO:0015389">
    <property type="term" value="F:pyrimidine- and adenosine-specific:sodium symporter activity"/>
    <property type="evidence" value="ECO:0007669"/>
    <property type="project" value="TreeGrafter"/>
</dbReference>
<dbReference type="GO" id="GO:0015860">
    <property type="term" value="P:purine nucleoside transmembrane transport"/>
    <property type="evidence" value="ECO:0007669"/>
    <property type="project" value="TreeGrafter"/>
</dbReference>
<dbReference type="GO" id="GO:0015864">
    <property type="term" value="P:pyrimidine nucleoside transport"/>
    <property type="evidence" value="ECO:0007669"/>
    <property type="project" value="TreeGrafter"/>
</dbReference>
<dbReference type="InterPro" id="IPR008276">
    <property type="entry name" value="C_nuclsd_transpt"/>
</dbReference>
<dbReference type="InterPro" id="IPR018270">
    <property type="entry name" value="C_nuclsd_transpt_met_bac"/>
</dbReference>
<dbReference type="InterPro" id="IPR011657">
    <property type="entry name" value="CNT_C_dom"/>
</dbReference>
<dbReference type="InterPro" id="IPR002668">
    <property type="entry name" value="CNT_N_dom"/>
</dbReference>
<dbReference type="InterPro" id="IPR011642">
    <property type="entry name" value="Gate_dom"/>
</dbReference>
<dbReference type="NCBIfam" id="TIGR00804">
    <property type="entry name" value="nupC"/>
    <property type="match status" value="1"/>
</dbReference>
<dbReference type="PANTHER" id="PTHR10590">
    <property type="entry name" value="SODIUM/NUCLEOSIDE COTRANSPORTER"/>
    <property type="match status" value="1"/>
</dbReference>
<dbReference type="PANTHER" id="PTHR10590:SF4">
    <property type="entry name" value="SOLUTE CARRIER FAMILY 28 MEMBER 3"/>
    <property type="match status" value="1"/>
</dbReference>
<dbReference type="Pfam" id="PF07670">
    <property type="entry name" value="Gate"/>
    <property type="match status" value="1"/>
</dbReference>
<dbReference type="Pfam" id="PF07662">
    <property type="entry name" value="Nucleos_tra2_C"/>
    <property type="match status" value="1"/>
</dbReference>
<dbReference type="Pfam" id="PF01773">
    <property type="entry name" value="Nucleos_tra2_N"/>
    <property type="match status" value="1"/>
</dbReference>
<organism>
    <name type="scientific">Eptatretus stoutii</name>
    <name type="common">Pacific hagfish</name>
    <dbReference type="NCBI Taxonomy" id="7765"/>
    <lineage>
        <taxon>Eukaryota</taxon>
        <taxon>Metazoa</taxon>
        <taxon>Chordata</taxon>
        <taxon>Craniata</taxon>
        <taxon>Vertebrata</taxon>
        <taxon>Cyclostomata</taxon>
        <taxon>Myxini</taxon>
        <taxon>Myxiniformes</taxon>
        <taxon>Myxinidae</taxon>
        <taxon>Eptatretinae</taxon>
        <taxon>Eptatretus</taxon>
    </lineage>
</organism>
<gene>
    <name type="primary">SLC28A3</name>
    <name type="synonym">CNT3</name>
</gene>
<sequence>MSAFKARGVENPSYEDPDEKQKPDLEMSKTNGIGVDNPSYYKNPEKYLGNENEEGKSNNDNEEEEEGEEDQGAVERCVNKFYGGIHNFYKRNKKIIHYTFLGLLLVGYFALVIAACIVNFKQSLALLVLTLIAIFFFFWDLFIAKYGDKIAEALKPCQKFLDNHWSIIRWFVYGALLLAVILWLTLDTAKRGANQVIPFFGLILYILLVFIFSKHPTKVRWRIVIWGLLLQFIFGLIILRTKPGLDAFNWLGIQVQTFLKYTDAGSRFLFGDDFQDHFFAFAVLPIVIFFSTVMSMMYYLGLMQWLILKVGWLMQITMGTSPMESMVSAGNIFVGQTESPLLIRPYLADLTISEMHSVMSSGFATIAGSVLGAYISLGIPAAHLLTASVMSAPAALAISKTFWPETKKSKNSTQTSIKLEKGQENNLVEAASQGASAAVPLVANIAANLIAFLAVLAFINATLSWLGSMFNYPQFSFEIICSYVLMPFAFMMGVNYDDSFLVAELLGMKTFFNEFVAYQRLSEYIHNRESGGPLFVDGVRQYMSVRSEAIATYALCGFANFGSLGIMIGGLSSLAPHRKSDIASCGIRALIAGTIACFSTACIAGVLYIPELYCPNLLMSTLFENGTTVNTTNLMSCCTDLFKSTTMLTPKNITFTEGFNTTMLNGCCTFFPSGFNCSEVRPE</sequence>
<proteinExistence type="evidence at transcript level"/>
<name>S28A3_EPTST</name>
<reference key="1">
    <citation type="journal article" date="1999" name="J. Biol. Chem.">
        <title>Identification of amino acid residues responsible for the pyrimidine and purine nucleoside specificities of human concentrative Na(+) nucleoside cotransporters hCNT1 and hCNT2.</title>
        <authorList>
            <person name="Loewen S.K."/>
            <person name="Ng A.M.L."/>
            <person name="Yao S.Y.M."/>
            <person name="Cass C.E."/>
            <person name="Baldwin S.A."/>
            <person name="Young J.D."/>
        </authorList>
    </citation>
    <scope>NUCLEOTIDE SEQUENCE [MRNA]</scope>
</reference>